<reference key="1">
    <citation type="journal article" date="2002" name="Proc. Natl. Acad. Sci. U.S.A.">
        <title>Genome sequence and comparative microarray analysis of serotype M18 group A Streptococcus strains associated with acute rheumatic fever outbreaks.</title>
        <authorList>
            <person name="Smoot J.C."/>
            <person name="Barbian K.D."/>
            <person name="Van Gompel J.J."/>
            <person name="Smoot L.M."/>
            <person name="Chaussee M.S."/>
            <person name="Sylva G.L."/>
            <person name="Sturdevant D.E."/>
            <person name="Ricklefs S.M."/>
            <person name="Porcella S.F."/>
            <person name="Parkins L.D."/>
            <person name="Beres S.B."/>
            <person name="Campbell D.S."/>
            <person name="Smith T.M."/>
            <person name="Zhang Q."/>
            <person name="Kapur V."/>
            <person name="Daly J.A."/>
            <person name="Veasy L.G."/>
            <person name="Musser J.M."/>
        </authorList>
    </citation>
    <scope>NUCLEOTIDE SEQUENCE [LARGE SCALE GENOMIC DNA]</scope>
    <source>
        <strain>MGAS8232</strain>
    </source>
</reference>
<organism>
    <name type="scientific">Streptococcus pyogenes serotype M18 (strain MGAS8232)</name>
    <dbReference type="NCBI Taxonomy" id="186103"/>
    <lineage>
        <taxon>Bacteria</taxon>
        <taxon>Bacillati</taxon>
        <taxon>Bacillota</taxon>
        <taxon>Bacilli</taxon>
        <taxon>Lactobacillales</taxon>
        <taxon>Streptococcaceae</taxon>
        <taxon>Streptococcus</taxon>
    </lineage>
</organism>
<name>RS4_STRP8</name>
<protein>
    <recommendedName>
        <fullName evidence="1">Small ribosomal subunit protein uS4</fullName>
    </recommendedName>
    <alternativeName>
        <fullName evidence="2">30S ribosomal protein S4</fullName>
    </alternativeName>
</protein>
<comment type="function">
    <text evidence="1">One of the primary rRNA binding proteins, it binds directly to 16S rRNA where it nucleates assembly of the body of the 30S subunit.</text>
</comment>
<comment type="function">
    <text evidence="1">With S5 and S12 plays an important role in translational accuracy.</text>
</comment>
<comment type="subunit">
    <text evidence="1">Part of the 30S ribosomal subunit. Contacts protein S5. The interaction surface between S4 and S5 is involved in control of translational fidelity.</text>
</comment>
<comment type="similarity">
    <text evidence="1">Belongs to the universal ribosomal protein uS4 family.</text>
</comment>
<sequence>MSRYTGPSWKQSRRLGLSLTGTGKELARRNYVPGQHGPNNRSKLSEYGLQLAEKQKLRFSYGLGEKQFRNLFVQATKIKEGTLGFNFMVLLERRLDNVVYRLGLATTRRQARQFVNHGHILVDGKRVDIPSYRVDPGQVISVREKSMKVPAILEAVEATLGRPAFVSFDAEKLEGSLTRLPERDEINPEINEALVVEFYNKML</sequence>
<dbReference type="EMBL" id="AE009949">
    <property type="protein sequence ID" value="AAL98649.1"/>
    <property type="molecule type" value="Genomic_DNA"/>
</dbReference>
<dbReference type="RefSeq" id="WP_002982092.1">
    <property type="nucleotide sequence ID" value="NC_003485.1"/>
</dbReference>
<dbReference type="SMR" id="P66569"/>
<dbReference type="GeneID" id="69901600"/>
<dbReference type="KEGG" id="spm:spyM18_2215"/>
<dbReference type="HOGENOM" id="CLU_092403_0_1_9"/>
<dbReference type="GO" id="GO:0015935">
    <property type="term" value="C:small ribosomal subunit"/>
    <property type="evidence" value="ECO:0007669"/>
    <property type="project" value="InterPro"/>
</dbReference>
<dbReference type="GO" id="GO:0019843">
    <property type="term" value="F:rRNA binding"/>
    <property type="evidence" value="ECO:0007669"/>
    <property type="project" value="UniProtKB-UniRule"/>
</dbReference>
<dbReference type="GO" id="GO:0003735">
    <property type="term" value="F:structural constituent of ribosome"/>
    <property type="evidence" value="ECO:0007669"/>
    <property type="project" value="InterPro"/>
</dbReference>
<dbReference type="GO" id="GO:0042274">
    <property type="term" value="P:ribosomal small subunit biogenesis"/>
    <property type="evidence" value="ECO:0007669"/>
    <property type="project" value="TreeGrafter"/>
</dbReference>
<dbReference type="GO" id="GO:0006412">
    <property type="term" value="P:translation"/>
    <property type="evidence" value="ECO:0007669"/>
    <property type="project" value="UniProtKB-UniRule"/>
</dbReference>
<dbReference type="CDD" id="cd00165">
    <property type="entry name" value="S4"/>
    <property type="match status" value="1"/>
</dbReference>
<dbReference type="FunFam" id="1.10.1050.10:FF:000001">
    <property type="entry name" value="30S ribosomal protein S4"/>
    <property type="match status" value="1"/>
</dbReference>
<dbReference type="FunFam" id="3.10.290.10:FF:000001">
    <property type="entry name" value="30S ribosomal protein S4"/>
    <property type="match status" value="1"/>
</dbReference>
<dbReference type="Gene3D" id="1.10.1050.10">
    <property type="entry name" value="Ribosomal Protein S4 Delta 41, Chain A, domain 1"/>
    <property type="match status" value="1"/>
</dbReference>
<dbReference type="Gene3D" id="3.10.290.10">
    <property type="entry name" value="RNA-binding S4 domain"/>
    <property type="match status" value="1"/>
</dbReference>
<dbReference type="HAMAP" id="MF_01306_B">
    <property type="entry name" value="Ribosomal_uS4_B"/>
    <property type="match status" value="1"/>
</dbReference>
<dbReference type="InterPro" id="IPR022801">
    <property type="entry name" value="Ribosomal_uS4"/>
</dbReference>
<dbReference type="InterPro" id="IPR005709">
    <property type="entry name" value="Ribosomal_uS4_bac-type"/>
</dbReference>
<dbReference type="InterPro" id="IPR018079">
    <property type="entry name" value="Ribosomal_uS4_CS"/>
</dbReference>
<dbReference type="InterPro" id="IPR001912">
    <property type="entry name" value="Ribosomal_uS4_N"/>
</dbReference>
<dbReference type="InterPro" id="IPR002942">
    <property type="entry name" value="S4_RNA-bd"/>
</dbReference>
<dbReference type="InterPro" id="IPR036986">
    <property type="entry name" value="S4_RNA-bd_sf"/>
</dbReference>
<dbReference type="NCBIfam" id="NF003717">
    <property type="entry name" value="PRK05327.1"/>
    <property type="match status" value="1"/>
</dbReference>
<dbReference type="NCBIfam" id="TIGR01017">
    <property type="entry name" value="rpsD_bact"/>
    <property type="match status" value="1"/>
</dbReference>
<dbReference type="PANTHER" id="PTHR11831">
    <property type="entry name" value="30S 40S RIBOSOMAL PROTEIN"/>
    <property type="match status" value="1"/>
</dbReference>
<dbReference type="PANTHER" id="PTHR11831:SF4">
    <property type="entry name" value="SMALL RIBOSOMAL SUBUNIT PROTEIN US4M"/>
    <property type="match status" value="1"/>
</dbReference>
<dbReference type="Pfam" id="PF00163">
    <property type="entry name" value="Ribosomal_S4"/>
    <property type="match status" value="1"/>
</dbReference>
<dbReference type="Pfam" id="PF01479">
    <property type="entry name" value="S4"/>
    <property type="match status" value="1"/>
</dbReference>
<dbReference type="SMART" id="SM01390">
    <property type="entry name" value="Ribosomal_S4"/>
    <property type="match status" value="1"/>
</dbReference>
<dbReference type="SMART" id="SM00363">
    <property type="entry name" value="S4"/>
    <property type="match status" value="1"/>
</dbReference>
<dbReference type="SUPFAM" id="SSF55174">
    <property type="entry name" value="Alpha-L RNA-binding motif"/>
    <property type="match status" value="1"/>
</dbReference>
<dbReference type="PROSITE" id="PS00632">
    <property type="entry name" value="RIBOSOMAL_S4"/>
    <property type="match status" value="1"/>
</dbReference>
<dbReference type="PROSITE" id="PS50889">
    <property type="entry name" value="S4"/>
    <property type="match status" value="1"/>
</dbReference>
<proteinExistence type="inferred from homology"/>
<evidence type="ECO:0000255" key="1">
    <source>
        <dbReference type="HAMAP-Rule" id="MF_01306"/>
    </source>
</evidence>
<evidence type="ECO:0000305" key="2"/>
<feature type="chain" id="PRO_0000132476" description="Small ribosomal subunit protein uS4">
    <location>
        <begin position="1"/>
        <end position="203"/>
    </location>
</feature>
<feature type="domain" description="S4 RNA-binding" evidence="1">
    <location>
        <begin position="93"/>
        <end position="156"/>
    </location>
</feature>
<gene>
    <name evidence="1" type="primary">rpsD</name>
    <name type="ordered locus">spyM18_2215</name>
</gene>
<accession>P66569</accession>
<accession>Q99XJ4</accession>
<keyword id="KW-0687">Ribonucleoprotein</keyword>
<keyword id="KW-0689">Ribosomal protein</keyword>
<keyword id="KW-0694">RNA-binding</keyword>
<keyword id="KW-0699">rRNA-binding</keyword>